<dbReference type="EMBL" id="CP000825">
    <property type="protein sequence ID" value="ABV49840.1"/>
    <property type="molecule type" value="Genomic_DNA"/>
</dbReference>
<dbReference type="RefSeq" id="WP_012007010.1">
    <property type="nucleotide sequence ID" value="NC_009840.1"/>
</dbReference>
<dbReference type="SMR" id="A8G2K9"/>
<dbReference type="STRING" id="93060.P9215_02211"/>
<dbReference type="KEGG" id="pmh:P9215_02211"/>
<dbReference type="eggNOG" id="COG0244">
    <property type="taxonomic scope" value="Bacteria"/>
</dbReference>
<dbReference type="HOGENOM" id="CLU_092227_1_1_3"/>
<dbReference type="OrthoDB" id="9808307at2"/>
<dbReference type="Proteomes" id="UP000002014">
    <property type="component" value="Chromosome"/>
</dbReference>
<dbReference type="GO" id="GO:1990904">
    <property type="term" value="C:ribonucleoprotein complex"/>
    <property type="evidence" value="ECO:0007669"/>
    <property type="project" value="UniProtKB-KW"/>
</dbReference>
<dbReference type="GO" id="GO:0005840">
    <property type="term" value="C:ribosome"/>
    <property type="evidence" value="ECO:0007669"/>
    <property type="project" value="UniProtKB-KW"/>
</dbReference>
<dbReference type="GO" id="GO:0070180">
    <property type="term" value="F:large ribosomal subunit rRNA binding"/>
    <property type="evidence" value="ECO:0007669"/>
    <property type="project" value="UniProtKB-UniRule"/>
</dbReference>
<dbReference type="GO" id="GO:0006412">
    <property type="term" value="P:translation"/>
    <property type="evidence" value="ECO:0007669"/>
    <property type="project" value="UniProtKB-UniRule"/>
</dbReference>
<dbReference type="CDD" id="cd05797">
    <property type="entry name" value="Ribosomal_L10"/>
    <property type="match status" value="1"/>
</dbReference>
<dbReference type="Gene3D" id="3.30.70.1730">
    <property type="match status" value="1"/>
</dbReference>
<dbReference type="Gene3D" id="6.10.250.290">
    <property type="match status" value="1"/>
</dbReference>
<dbReference type="HAMAP" id="MF_00362">
    <property type="entry name" value="Ribosomal_uL10"/>
    <property type="match status" value="1"/>
</dbReference>
<dbReference type="InterPro" id="IPR001790">
    <property type="entry name" value="Ribosomal_uL10"/>
</dbReference>
<dbReference type="InterPro" id="IPR043141">
    <property type="entry name" value="Ribosomal_uL10-like_sf"/>
</dbReference>
<dbReference type="InterPro" id="IPR022973">
    <property type="entry name" value="Ribosomal_uL10_bac"/>
</dbReference>
<dbReference type="InterPro" id="IPR047865">
    <property type="entry name" value="Ribosomal_uL10_bac_type"/>
</dbReference>
<dbReference type="NCBIfam" id="NF000955">
    <property type="entry name" value="PRK00099.1-1"/>
    <property type="match status" value="1"/>
</dbReference>
<dbReference type="PANTHER" id="PTHR11560">
    <property type="entry name" value="39S RIBOSOMAL PROTEIN L10, MITOCHONDRIAL"/>
    <property type="match status" value="1"/>
</dbReference>
<dbReference type="Pfam" id="PF00466">
    <property type="entry name" value="Ribosomal_L10"/>
    <property type="match status" value="1"/>
</dbReference>
<dbReference type="SUPFAM" id="SSF160369">
    <property type="entry name" value="Ribosomal protein L10-like"/>
    <property type="match status" value="1"/>
</dbReference>
<accession>A8G2K9</accession>
<proteinExistence type="inferred from homology"/>
<name>RL10_PROM2</name>
<comment type="function">
    <text evidence="1">Forms part of the ribosomal stalk, playing a central role in the interaction of the ribosome with GTP-bound translation factors.</text>
</comment>
<comment type="subunit">
    <text evidence="1">Part of the ribosomal stalk of the 50S ribosomal subunit. The N-terminus interacts with L11 and the large rRNA to form the base of the stalk. The C-terminus forms an elongated spine to which L12 dimers bind in a sequential fashion forming a multimeric L10(L12)X complex.</text>
</comment>
<comment type="similarity">
    <text evidence="1">Belongs to the universal ribosomal protein uL10 family.</text>
</comment>
<keyword id="KW-0687">Ribonucleoprotein</keyword>
<keyword id="KW-0689">Ribosomal protein</keyword>
<keyword id="KW-0694">RNA-binding</keyword>
<keyword id="KW-0699">rRNA-binding</keyword>
<feature type="chain" id="PRO_1000059890" description="Large ribosomal subunit protein uL10">
    <location>
        <begin position="1"/>
        <end position="175"/>
    </location>
</feature>
<gene>
    <name evidence="1" type="primary">rplJ</name>
    <name evidence="1" type="synonym">rpl10</name>
    <name type="ordered locus">P9215_02211</name>
</gene>
<protein>
    <recommendedName>
        <fullName evidence="1">Large ribosomal subunit protein uL10</fullName>
    </recommendedName>
    <alternativeName>
        <fullName evidence="2">50S ribosomal protein L10</fullName>
    </alternativeName>
</protein>
<reference key="1">
    <citation type="journal article" date="2007" name="PLoS Genet.">
        <title>Patterns and implications of gene gain and loss in the evolution of Prochlorococcus.</title>
        <authorList>
            <person name="Kettler G.C."/>
            <person name="Martiny A.C."/>
            <person name="Huang K."/>
            <person name="Zucker J."/>
            <person name="Coleman M.L."/>
            <person name="Rodrigue S."/>
            <person name="Chen F."/>
            <person name="Lapidus A."/>
            <person name="Ferriera S."/>
            <person name="Johnson J."/>
            <person name="Steglich C."/>
            <person name="Church G.M."/>
            <person name="Richardson P."/>
            <person name="Chisholm S.W."/>
        </authorList>
    </citation>
    <scope>NUCLEOTIDE SEQUENCE [LARGE SCALE GENOMIC DNA]</scope>
    <source>
        <strain>MIT 9215</strain>
    </source>
</reference>
<sequence length="175" mass="19068">MGRTLENKQQIVTEIKSLLNDSEMAVVLDYKGLTIKEMSDLRSRLRTTNGICRVTKNSLMRKAIDGDSNWNDLESLLTGTNAFVLIKEDVGGAVKAIQSFQKDTKKSETKGALFEGRLLSDSEIKEIASLPSKEVLMAKIAGALNGVATKIAISINEVPSGLARSLKQHSEKSES</sequence>
<organism>
    <name type="scientific">Prochlorococcus marinus (strain MIT 9215)</name>
    <dbReference type="NCBI Taxonomy" id="93060"/>
    <lineage>
        <taxon>Bacteria</taxon>
        <taxon>Bacillati</taxon>
        <taxon>Cyanobacteriota</taxon>
        <taxon>Cyanophyceae</taxon>
        <taxon>Synechococcales</taxon>
        <taxon>Prochlorococcaceae</taxon>
        <taxon>Prochlorococcus</taxon>
    </lineage>
</organism>
<evidence type="ECO:0000255" key="1">
    <source>
        <dbReference type="HAMAP-Rule" id="MF_00362"/>
    </source>
</evidence>
<evidence type="ECO:0000305" key="2"/>